<feature type="chain" id="PRO_0000345685" description="Cell division protein ZapA">
    <location>
        <begin position="1"/>
        <end position="85"/>
    </location>
</feature>
<feature type="coiled-coil region" evidence="1">
    <location>
        <begin position="60"/>
        <end position="85"/>
    </location>
</feature>
<comment type="function">
    <text evidence="1">Activator of cell division through the inhibition of FtsZ GTPase activity, therefore promoting FtsZ assembly into bundles of protofilaments necessary for the formation of the division Z ring. It is recruited early at mid-cell but it is not essential for cell division.</text>
</comment>
<comment type="subunit">
    <text evidence="1">Homodimer. Interacts with FtsZ.</text>
</comment>
<comment type="subcellular location">
    <subcellularLocation>
        <location evidence="1">Cytoplasm</location>
    </subcellularLocation>
    <text evidence="1">Localizes at mid-cell. In sporulating cells, localizes near the cell poles.</text>
</comment>
<comment type="similarity">
    <text evidence="1">Belongs to the ZapA family. Type 2 subfamily.</text>
</comment>
<gene>
    <name evidence="1" type="primary">zapA</name>
    <name type="ordered locus">BPUM_2519</name>
</gene>
<keyword id="KW-0131">Cell cycle</keyword>
<keyword id="KW-0132">Cell division</keyword>
<keyword id="KW-0175">Coiled coil</keyword>
<keyword id="KW-0963">Cytoplasm</keyword>
<keyword id="KW-0717">Septation</keyword>
<dbReference type="EMBL" id="CP000813">
    <property type="protein sequence ID" value="ABV63181.1"/>
    <property type="molecule type" value="Genomic_DNA"/>
</dbReference>
<dbReference type="RefSeq" id="WP_012010831.1">
    <property type="nucleotide sequence ID" value="NZ_VEIS01000006.1"/>
</dbReference>
<dbReference type="SMR" id="A8FG14"/>
<dbReference type="STRING" id="315750.BPUM_2519"/>
<dbReference type="GeneID" id="61769527"/>
<dbReference type="KEGG" id="bpu:BPUM_2519"/>
<dbReference type="eggNOG" id="COG3027">
    <property type="taxonomic scope" value="Bacteria"/>
</dbReference>
<dbReference type="HOGENOM" id="CLU_116623_4_0_9"/>
<dbReference type="OrthoDB" id="9808604at2"/>
<dbReference type="Proteomes" id="UP000001355">
    <property type="component" value="Chromosome"/>
</dbReference>
<dbReference type="GO" id="GO:0032153">
    <property type="term" value="C:cell division site"/>
    <property type="evidence" value="ECO:0007669"/>
    <property type="project" value="TreeGrafter"/>
</dbReference>
<dbReference type="GO" id="GO:0030428">
    <property type="term" value="C:cell septum"/>
    <property type="evidence" value="ECO:0007669"/>
    <property type="project" value="TreeGrafter"/>
</dbReference>
<dbReference type="GO" id="GO:0005829">
    <property type="term" value="C:cytosol"/>
    <property type="evidence" value="ECO:0007669"/>
    <property type="project" value="TreeGrafter"/>
</dbReference>
<dbReference type="GO" id="GO:0005886">
    <property type="term" value="C:plasma membrane"/>
    <property type="evidence" value="ECO:0007669"/>
    <property type="project" value="UniProtKB-UniRule"/>
</dbReference>
<dbReference type="GO" id="GO:0000917">
    <property type="term" value="P:division septum assembly"/>
    <property type="evidence" value="ECO:0007669"/>
    <property type="project" value="UniProtKB-KW"/>
</dbReference>
<dbReference type="GO" id="GO:0043093">
    <property type="term" value="P:FtsZ-dependent cytokinesis"/>
    <property type="evidence" value="ECO:0007669"/>
    <property type="project" value="TreeGrafter"/>
</dbReference>
<dbReference type="GO" id="GO:0000921">
    <property type="term" value="P:septin ring assembly"/>
    <property type="evidence" value="ECO:0007669"/>
    <property type="project" value="TreeGrafter"/>
</dbReference>
<dbReference type="Gene3D" id="6.10.250.790">
    <property type="match status" value="1"/>
</dbReference>
<dbReference type="HAMAP" id="MF_02013">
    <property type="entry name" value="ZapA_type2"/>
    <property type="match status" value="1"/>
</dbReference>
<dbReference type="InterPro" id="IPR053712">
    <property type="entry name" value="Bac_CellDiv_Activator"/>
</dbReference>
<dbReference type="InterPro" id="IPR007838">
    <property type="entry name" value="Cell_div_ZapA-like"/>
</dbReference>
<dbReference type="InterPro" id="IPR036192">
    <property type="entry name" value="Cell_div_ZapA-like_sf"/>
</dbReference>
<dbReference type="InterPro" id="IPR023688">
    <property type="entry name" value="Cell_div_ZapA_firmicutes"/>
</dbReference>
<dbReference type="NCBIfam" id="NF010724">
    <property type="entry name" value="PRK14126.1"/>
    <property type="match status" value="1"/>
</dbReference>
<dbReference type="PANTHER" id="PTHR34981">
    <property type="entry name" value="CELL DIVISION PROTEIN ZAPA"/>
    <property type="match status" value="1"/>
</dbReference>
<dbReference type="PANTHER" id="PTHR34981:SF1">
    <property type="entry name" value="CELL DIVISION PROTEIN ZAPA"/>
    <property type="match status" value="1"/>
</dbReference>
<dbReference type="Pfam" id="PF05164">
    <property type="entry name" value="ZapA"/>
    <property type="match status" value="1"/>
</dbReference>
<dbReference type="SUPFAM" id="SSF102829">
    <property type="entry name" value="Cell division protein ZapA-like"/>
    <property type="match status" value="1"/>
</dbReference>
<organism>
    <name type="scientific">Bacillus pumilus (strain SAFR-032)</name>
    <dbReference type="NCBI Taxonomy" id="315750"/>
    <lineage>
        <taxon>Bacteria</taxon>
        <taxon>Bacillati</taxon>
        <taxon>Bacillota</taxon>
        <taxon>Bacilli</taxon>
        <taxon>Bacillales</taxon>
        <taxon>Bacillaceae</taxon>
        <taxon>Bacillus</taxon>
    </lineage>
</organism>
<evidence type="ECO:0000255" key="1">
    <source>
        <dbReference type="HAMAP-Rule" id="MF_02013"/>
    </source>
</evidence>
<name>ZAPA_BACP2</name>
<proteinExistence type="inferred from homology"/>
<accession>A8FG14</accession>
<protein>
    <recommendedName>
        <fullName evidence="1">Cell division protein ZapA</fullName>
    </recommendedName>
    <alternativeName>
        <fullName evidence="1">Z ring-associated protein ZapA</fullName>
    </alternativeName>
</protein>
<sequence>MSDGGKTKTTVEIYGQSYTIIGQETKMHMRHVASIVDDKMREINEKNPYLDINKLAVLTAVNVVHDYLKLKEQYEKLEIQLKEKE</sequence>
<reference key="1">
    <citation type="journal article" date="2007" name="PLoS ONE">
        <title>Paradoxical DNA repair and peroxide resistance gene conservation in Bacillus pumilus SAFR-032.</title>
        <authorList>
            <person name="Gioia J."/>
            <person name="Yerrapragada S."/>
            <person name="Qin X."/>
            <person name="Jiang H."/>
            <person name="Igboeli O.C."/>
            <person name="Muzny D."/>
            <person name="Dugan-Rocha S."/>
            <person name="Ding Y."/>
            <person name="Hawes A."/>
            <person name="Liu W."/>
            <person name="Perez L."/>
            <person name="Kovar C."/>
            <person name="Dinh H."/>
            <person name="Lee S."/>
            <person name="Nazareth L."/>
            <person name="Blyth P."/>
            <person name="Holder M."/>
            <person name="Buhay C."/>
            <person name="Tirumalai M.R."/>
            <person name="Liu Y."/>
            <person name="Dasgupta I."/>
            <person name="Bokhetache L."/>
            <person name="Fujita M."/>
            <person name="Karouia F."/>
            <person name="Eswara Moorthy P."/>
            <person name="Siefert J."/>
            <person name="Uzman A."/>
            <person name="Buzumbo P."/>
            <person name="Verma A."/>
            <person name="Zwiya H."/>
            <person name="McWilliams B.D."/>
            <person name="Olowu A."/>
            <person name="Clinkenbeard K.D."/>
            <person name="Newcombe D."/>
            <person name="Golebiewski L."/>
            <person name="Petrosino J.F."/>
            <person name="Nicholson W.L."/>
            <person name="Fox G.E."/>
            <person name="Venkateswaran K."/>
            <person name="Highlander S.K."/>
            <person name="Weinstock G.M."/>
        </authorList>
    </citation>
    <scope>NUCLEOTIDE SEQUENCE [LARGE SCALE GENOMIC DNA]</scope>
    <source>
        <strain>SAFR-032</strain>
    </source>
</reference>